<gene>
    <name type="primary">SUP35</name>
    <name type="synonym">GST1</name>
    <name type="synonym">PNM2</name>
    <name type="synonym">SAL3</name>
    <name type="synonym">SUF12</name>
    <name type="synonym">SUP2</name>
    <name type="ordered locus">YDR172W</name>
    <name type="ORF">YD9395.05</name>
</gene>
<accession>P05453</accession>
<accession>D6VSF4</accession>
<accession>P05420</accession>
<evidence type="ECO:0000250" key="1">
    <source>
        <dbReference type="UniProtKB" id="O74718"/>
    </source>
</evidence>
<evidence type="ECO:0000255" key="2">
    <source>
        <dbReference type="PROSITE-ProRule" id="PRU01059"/>
    </source>
</evidence>
<evidence type="ECO:0000256" key="3">
    <source>
        <dbReference type="SAM" id="MobiDB-lite"/>
    </source>
</evidence>
<evidence type="ECO:0000269" key="4">
    <source>
    </source>
</evidence>
<evidence type="ECO:0000269" key="5">
    <source>
    </source>
</evidence>
<evidence type="ECO:0000269" key="6">
    <source>
    </source>
</evidence>
<evidence type="ECO:0000269" key="7">
    <source>
    </source>
</evidence>
<evidence type="ECO:0000269" key="8">
    <source>
    </source>
</evidence>
<evidence type="ECO:0000269" key="9">
    <source>
    </source>
</evidence>
<evidence type="ECO:0000269" key="10">
    <source>
    </source>
</evidence>
<evidence type="ECO:0000269" key="11">
    <source>
    </source>
</evidence>
<evidence type="ECO:0000305" key="12"/>
<evidence type="ECO:0000305" key="13">
    <source>
    </source>
</evidence>
<evidence type="ECO:0000305" key="14">
    <source>
    </source>
</evidence>
<evidence type="ECO:0000305" key="15">
    <source>
    </source>
</evidence>
<evidence type="ECO:0000305" key="16">
    <source>
    </source>
</evidence>
<evidence type="ECO:0007744" key="17">
    <source>
    </source>
</evidence>
<evidence type="ECO:0007744" key="18">
    <source>
    </source>
</evidence>
<reference key="1">
    <citation type="journal article" date="1988" name="Gene">
        <title>Nucleotide sequence of the SUP2 (SUP35) gene of Saccharomyces cerevisiae.</title>
        <authorList>
            <person name="Kushnirov V.V."/>
            <person name="Ter-Avanesyan M.D."/>
            <person name="Telckov M.V."/>
            <person name="Surguchov A.P."/>
            <person name="Smirnov V.N."/>
            <person name="Inge-Vechtomov S.G."/>
        </authorList>
    </citation>
    <scope>NUCLEOTIDE SEQUENCE [GENOMIC DNA]</scope>
</reference>
<reference key="2">
    <citation type="journal article" date="1987" name="FEBS Lett.">
        <title>Localization of possible functional domains in sup2 gene product of the yeast Saccharomyces cerevisiae.</title>
        <authorList>
            <person name="Kushnirov V.V."/>
            <person name="Ter-Avanesyan M.D."/>
            <person name="Surguchov A.P."/>
            <person name="Smirnov V.N."/>
            <person name="Inge-Vechtomov S.G."/>
        </authorList>
    </citation>
    <scope>NUCLEOTIDE SEQUENCE [GENOMIC DNA]</scope>
</reference>
<reference key="3">
    <citation type="journal article" date="1988" name="J. Mol. Biol.">
        <title>SUF12 suppressor protein of yeast. A fusion protein related to the EF-1 family of elongation factors.</title>
        <authorList>
            <person name="Wilson P.G."/>
            <person name="Culbertson M.R."/>
        </authorList>
    </citation>
    <scope>NUCLEOTIDE SEQUENCE [GENOMIC DNA]</scope>
</reference>
<reference key="4">
    <citation type="journal article" date="1988" name="EMBO J.">
        <title>A yeast gene required for the G1-to-S transition encodes a protein containing an A-kinase target site and GTPase domain.</title>
        <authorList>
            <person name="Kukuchi Y."/>
            <person name="Shimatake H."/>
            <person name="Kikuchi A."/>
        </authorList>
    </citation>
    <scope>NUCLEOTIDE SEQUENCE [GENOMIC DNA]</scope>
</reference>
<reference key="5">
    <citation type="journal article" date="1997" name="Nature">
        <title>The nucleotide sequence of Saccharomyces cerevisiae chromosome IV.</title>
        <authorList>
            <person name="Jacq C."/>
            <person name="Alt-Moerbe J."/>
            <person name="Andre B."/>
            <person name="Arnold W."/>
            <person name="Bahr A."/>
            <person name="Ballesta J.P.G."/>
            <person name="Bargues M."/>
            <person name="Baron L."/>
            <person name="Becker A."/>
            <person name="Biteau N."/>
            <person name="Bloecker H."/>
            <person name="Blugeon C."/>
            <person name="Boskovic J."/>
            <person name="Brandt P."/>
            <person name="Brueckner M."/>
            <person name="Buitrago M.J."/>
            <person name="Coster F."/>
            <person name="Delaveau T."/>
            <person name="del Rey F."/>
            <person name="Dujon B."/>
            <person name="Eide L.G."/>
            <person name="Garcia-Cantalejo J.M."/>
            <person name="Goffeau A."/>
            <person name="Gomez-Peris A."/>
            <person name="Granotier C."/>
            <person name="Hanemann V."/>
            <person name="Hankeln T."/>
            <person name="Hoheisel J.D."/>
            <person name="Jaeger W."/>
            <person name="Jimenez A."/>
            <person name="Jonniaux J.-L."/>
            <person name="Kraemer C."/>
            <person name="Kuester H."/>
            <person name="Laamanen P."/>
            <person name="Legros Y."/>
            <person name="Louis E.J."/>
            <person name="Moeller-Rieker S."/>
            <person name="Monnet A."/>
            <person name="Moro M."/>
            <person name="Mueller-Auer S."/>
            <person name="Nussbaumer B."/>
            <person name="Paricio N."/>
            <person name="Paulin L."/>
            <person name="Perea J."/>
            <person name="Perez-Alonso M."/>
            <person name="Perez-Ortin J.E."/>
            <person name="Pohl T.M."/>
            <person name="Prydz H."/>
            <person name="Purnelle B."/>
            <person name="Rasmussen S.W."/>
            <person name="Remacha M.A."/>
            <person name="Revuelta J.L."/>
            <person name="Rieger M."/>
            <person name="Salom D."/>
            <person name="Saluz H.P."/>
            <person name="Saiz J.E."/>
            <person name="Saren A.-M."/>
            <person name="Schaefer M."/>
            <person name="Scharfe M."/>
            <person name="Schmidt E.R."/>
            <person name="Schneider C."/>
            <person name="Scholler P."/>
            <person name="Schwarz S."/>
            <person name="Soler-Mira A."/>
            <person name="Urrestarazu L.A."/>
            <person name="Verhasselt P."/>
            <person name="Vissers S."/>
            <person name="Voet M."/>
            <person name="Volckaert G."/>
            <person name="Wagner G."/>
            <person name="Wambutt R."/>
            <person name="Wedler E."/>
            <person name="Wedler H."/>
            <person name="Woelfl S."/>
            <person name="Harris D.E."/>
            <person name="Bowman S."/>
            <person name="Brown D."/>
            <person name="Churcher C.M."/>
            <person name="Connor R."/>
            <person name="Dedman K."/>
            <person name="Gentles S."/>
            <person name="Hamlin N."/>
            <person name="Hunt S."/>
            <person name="Jones L."/>
            <person name="McDonald S."/>
            <person name="Murphy L.D."/>
            <person name="Niblett D."/>
            <person name="Odell C."/>
            <person name="Oliver K."/>
            <person name="Rajandream M.A."/>
            <person name="Richards C."/>
            <person name="Shore L."/>
            <person name="Walsh S.V."/>
            <person name="Barrell B.G."/>
            <person name="Dietrich F.S."/>
            <person name="Mulligan J.T."/>
            <person name="Allen E."/>
            <person name="Araujo R."/>
            <person name="Aviles E."/>
            <person name="Berno A."/>
            <person name="Carpenter J."/>
            <person name="Chen E."/>
            <person name="Cherry J.M."/>
            <person name="Chung E."/>
            <person name="Duncan M."/>
            <person name="Hunicke-Smith S."/>
            <person name="Hyman R.W."/>
            <person name="Komp C."/>
            <person name="Lashkari D."/>
            <person name="Lew H."/>
            <person name="Lin D."/>
            <person name="Mosedale D."/>
            <person name="Nakahara K."/>
            <person name="Namath A."/>
            <person name="Oefner P."/>
            <person name="Oh C."/>
            <person name="Petel F.X."/>
            <person name="Roberts D."/>
            <person name="Schramm S."/>
            <person name="Schroeder M."/>
            <person name="Shogren T."/>
            <person name="Shroff N."/>
            <person name="Winant A."/>
            <person name="Yelton M.A."/>
            <person name="Botstein D."/>
            <person name="Davis R.W."/>
            <person name="Johnston M."/>
            <person name="Andrews S."/>
            <person name="Brinkman R."/>
            <person name="Cooper J."/>
            <person name="Ding H."/>
            <person name="Du Z."/>
            <person name="Favello A."/>
            <person name="Fulton L."/>
            <person name="Gattung S."/>
            <person name="Greco T."/>
            <person name="Hallsworth K."/>
            <person name="Hawkins J."/>
            <person name="Hillier L.W."/>
            <person name="Jier M."/>
            <person name="Johnson D."/>
            <person name="Johnston L."/>
            <person name="Kirsten J."/>
            <person name="Kucaba T."/>
            <person name="Langston Y."/>
            <person name="Latreille P."/>
            <person name="Le T."/>
            <person name="Mardis E."/>
            <person name="Menezes S."/>
            <person name="Miller N."/>
            <person name="Nhan M."/>
            <person name="Pauley A."/>
            <person name="Peluso D."/>
            <person name="Rifkin L."/>
            <person name="Riles L."/>
            <person name="Taich A."/>
            <person name="Trevaskis E."/>
            <person name="Vignati D."/>
            <person name="Wilcox L."/>
            <person name="Wohldman P."/>
            <person name="Vaudin M."/>
            <person name="Wilson R."/>
            <person name="Waterston R."/>
            <person name="Albermann K."/>
            <person name="Hani J."/>
            <person name="Heumann K."/>
            <person name="Kleine K."/>
            <person name="Mewes H.-W."/>
            <person name="Zollner A."/>
            <person name="Zaccaria P."/>
        </authorList>
    </citation>
    <scope>NUCLEOTIDE SEQUENCE [LARGE SCALE GENOMIC DNA]</scope>
    <source>
        <strain>ATCC 204508 / S288c</strain>
    </source>
</reference>
<reference key="6">
    <citation type="journal article" date="2014" name="G3 (Bethesda)">
        <title>The reference genome sequence of Saccharomyces cerevisiae: Then and now.</title>
        <authorList>
            <person name="Engel S.R."/>
            <person name="Dietrich F.S."/>
            <person name="Fisk D.G."/>
            <person name="Binkley G."/>
            <person name="Balakrishnan R."/>
            <person name="Costanzo M.C."/>
            <person name="Dwight S.S."/>
            <person name="Hitz B.C."/>
            <person name="Karra K."/>
            <person name="Nash R.S."/>
            <person name="Weng S."/>
            <person name="Wong E.D."/>
            <person name="Lloyd P."/>
            <person name="Skrzypek M.S."/>
            <person name="Miyasato S.R."/>
            <person name="Simison M."/>
            <person name="Cherry J.M."/>
        </authorList>
    </citation>
    <scope>GENOME REANNOTATION</scope>
    <source>
        <strain>ATCC 204508 / S288c</strain>
    </source>
</reference>
<reference key="7">
    <citation type="journal article" date="1995" name="EMBO J.">
        <title>The products of the SUP45 (eRF1) and SUP35 genes interact to mediate translation termination in Saccharomyces cerevisiae.</title>
        <authorList>
            <person name="Stansfield I."/>
            <person name="Jones K.M."/>
            <person name="Kushnirov V.V."/>
            <person name="Dagkesamanskaya A.R."/>
            <person name="Poznyakovski A.I."/>
            <person name="Paushkin S.V."/>
            <person name="Nierras C.R."/>
            <person name="Cox B.S."/>
            <person name="Ter-Avanesyan M.D."/>
            <person name="Tuite M.F."/>
        </authorList>
    </citation>
    <scope>FUNCTION</scope>
</reference>
<reference key="8">
    <citation type="journal article" date="1996" name="EMBO J.">
        <title>Propagation of the yeast prion-like [psi+] determinant is mediated by oligomerization of the SUP35-encoded polypeptide chain release factor.</title>
        <authorList>
            <person name="Paushkin S.V."/>
            <person name="Kushnirov V.V."/>
            <person name="Smirnov V.N."/>
            <person name="Ter-Avanesyan M.D."/>
        </authorList>
    </citation>
    <scope>PRION FORMATION</scope>
    <scope>AGGREGATION</scope>
</reference>
<reference key="9">
    <citation type="journal article" date="1996" name="Genetics">
        <title>Genesis and variability of [PSI] prion factors in Saccharomyces cerevisiae.</title>
        <authorList>
            <person name="Derkatch I.L."/>
            <person name="Chernoff Y.O."/>
            <person name="Kushnirov V.V."/>
            <person name="Inge-Vechtomov S.G."/>
            <person name="Liebman S.W."/>
        </authorList>
    </citation>
    <scope>PRION FORMATION</scope>
</reference>
<reference key="10">
    <citation type="journal article" date="1997" name="Genetics">
        <title>Genetic and environmental factors affecting the de novo appearance of the [PSI+] prion in Saccharomyces cerevisiae.</title>
        <authorList>
            <person name="Derkatch I.L."/>
            <person name="Bradley M.E."/>
            <person name="Zhou P."/>
            <person name="Chernoff Y.O."/>
            <person name="Liebman S.W."/>
        </authorList>
    </citation>
    <scope>PRION FORMATION</scope>
    <scope>PRION CURING</scope>
</reference>
<reference key="11">
    <citation type="journal article" date="2001" name="Cell">
        <title>Prions affect the appearance of other prions: the story of [PIN(+)].</title>
        <authorList>
            <person name="Derkatch I.L."/>
            <person name="Bradley M.E."/>
            <person name="Hong J.Y."/>
            <person name="Liebman S.W."/>
        </authorList>
    </citation>
    <scope>PRION FORMATION</scope>
</reference>
<reference key="12">
    <citation type="journal article" date="2002" name="Mol. Cell. Biol.">
        <title>Poly(A)-binding protein acts in translation termination via eukaryotic release factor 3 interaction and does not influence [PSI(+)] propagation.</title>
        <authorList>
            <person name="Cosson B."/>
            <person name="Couturier A."/>
            <person name="Chabelskaya S."/>
            <person name="Kiktev D."/>
            <person name="Inge-Vechtomov S.G."/>
            <person name="Philippe M."/>
            <person name="Zhouravleva G."/>
        </authorList>
    </citation>
    <scope>INTERACTION WITH PAB1</scope>
</reference>
<reference key="13">
    <citation type="journal article" date="2003" name="J. Biol. Chem.">
        <title>Translation termination factor eRF3 mediates mRNA decay through the regulation of deadenylation.</title>
        <authorList>
            <person name="Hosoda N."/>
            <person name="Kobayashi T."/>
            <person name="Uchida N."/>
            <person name="Funakoshi Y."/>
            <person name="Kikuchi Y."/>
            <person name="Hoshino S."/>
            <person name="Katada T."/>
        </authorList>
    </citation>
    <scope>FUNCTION IN MRNA DECAY</scope>
    <scope>INTERACTION WITH PAB1</scope>
</reference>
<reference key="14">
    <citation type="journal article" date="2003" name="Nature">
        <title>Global analysis of protein expression in yeast.</title>
        <authorList>
            <person name="Ghaemmaghami S."/>
            <person name="Huh W.-K."/>
            <person name="Bower K."/>
            <person name="Howson R.W."/>
            <person name="Belle A."/>
            <person name="Dephoure N."/>
            <person name="O'Shea E.K."/>
            <person name="Weissman J.S."/>
        </authorList>
    </citation>
    <scope>LEVEL OF PROTEIN EXPRESSION [LARGE SCALE ANALYSIS]</scope>
</reference>
<reference key="15">
    <citation type="journal article" date="2004" name="J. Biol. Chem.">
        <title>The GTP-binding release factor eRF3 as a key mediator coupling translation termination to mRNA decay.</title>
        <authorList>
            <person name="Kobayashi T."/>
            <person name="Funakoshi Y."/>
            <person name="Hoshino S."/>
            <person name="Katada T."/>
        </authorList>
    </citation>
    <scope>FUNCTION IN MRNA DECAY</scope>
    <scope>INTERACTION WITH PAB1</scope>
</reference>
<reference key="16">
    <citation type="journal article" date="2004" name="Nature">
        <title>Protein-only transmission of three yeast prion strains.</title>
        <authorList>
            <person name="King C.Y."/>
            <person name="Diaz-Avalos R."/>
        </authorList>
    </citation>
    <scope>PRION PROPAGATION</scope>
    <scope>AMYLOID STRUCTURE</scope>
</reference>
<reference key="17">
    <citation type="journal article" date="2004" name="Nature">
        <title>Conformational variations in an infectious protein determine prion strain differences.</title>
        <authorList>
            <person name="Tanaka M."/>
            <person name="Chien P."/>
            <person name="Naber N."/>
            <person name="Cooke R."/>
            <person name="Weissman J.S."/>
        </authorList>
    </citation>
    <scope>PRION PROPAGATION</scope>
    <scope>AMYLOID STRUCTURE</scope>
</reference>
<reference key="18">
    <citation type="journal article" date="2004" name="Nature">
        <title>A faux 3'-UTR promotes aberrant termination and triggers nonsense-mediated mRNA decay.</title>
        <authorList>
            <person name="Amrani N."/>
            <person name="Ganesan R."/>
            <person name="Kervestin S."/>
            <person name="Mangus D.A."/>
            <person name="Ghosh S."/>
            <person name="Jacobson A."/>
        </authorList>
    </citation>
    <scope>INTERACTION WITH PAB1</scope>
</reference>
<reference key="19">
    <citation type="journal article" date="2006" name="Mol. Cell. Biol.">
        <title>Tpa1p is part of an mRNP complex that influences translation termination, mRNA deadenylation, and mRNA turnover in Saccharomyces cerevisiae.</title>
        <authorList>
            <person name="Keeling K.M."/>
            <person name="Salas-Marco J."/>
            <person name="Osherovich L.Z."/>
            <person name="Bedwell D.M."/>
        </authorList>
    </citation>
    <scope>INTERACTION WITH TPA1</scope>
</reference>
<reference key="20">
    <citation type="journal article" date="2007" name="J. Proteome Res.">
        <title>Large-scale phosphorylation analysis of alpha-factor-arrested Saccharomyces cerevisiae.</title>
        <authorList>
            <person name="Li X."/>
            <person name="Gerber S.A."/>
            <person name="Rudner A.D."/>
            <person name="Beausoleil S.A."/>
            <person name="Haas W."/>
            <person name="Villen J."/>
            <person name="Elias J.E."/>
            <person name="Gygi S.P."/>
        </authorList>
    </citation>
    <scope>PHOSPHORYLATION [LARGE SCALE ANALYSIS] AT SER-571</scope>
    <scope>IDENTIFICATION BY MASS SPECTROMETRY [LARGE SCALE ANALYSIS]</scope>
    <source>
        <strain>ADR376</strain>
    </source>
</reference>
<reference key="21">
    <citation type="journal article" date="2008" name="Mol. Cell. Proteomics">
        <title>A multidimensional chromatography technology for in-depth phosphoproteome analysis.</title>
        <authorList>
            <person name="Albuquerque C.P."/>
            <person name="Smolka M.B."/>
            <person name="Payne S.H."/>
            <person name="Bafna V."/>
            <person name="Eng J."/>
            <person name="Zhou H."/>
        </authorList>
    </citation>
    <scope>IDENTIFICATION BY MASS SPECTROMETRY [LARGE SCALE ANALYSIS]</scope>
</reference>
<reference key="22">
    <citation type="journal article" date="2010" name="Genetics">
        <title>The spontaneous appearance rate of the yeast prion [PSI+] and its implications for the evolution of the evolvability properties of the [PSI+] system.</title>
        <authorList>
            <person name="Lancaster A.K."/>
            <person name="Bardill J.P."/>
            <person name="True H.L."/>
            <person name="Masel J."/>
        </authorList>
    </citation>
    <scope>PRION APPEARANCE</scope>
</reference>
<reference key="23">
    <citation type="journal article" date="2012" name="Proc. Natl. Acad. Sci. U.S.A.">
        <title>N-terminal acetylome analyses and functional insights of the N-terminal acetyltransferase NatB.</title>
        <authorList>
            <person name="Van Damme P."/>
            <person name="Lasa M."/>
            <person name="Polevoda B."/>
            <person name="Gazquez C."/>
            <person name="Elosegui-Artola A."/>
            <person name="Kim D.S."/>
            <person name="De Juan-Pardo E."/>
            <person name="Demeyer K."/>
            <person name="Hole K."/>
            <person name="Larrea E."/>
            <person name="Timmerman E."/>
            <person name="Prieto J."/>
            <person name="Arnesen T."/>
            <person name="Sherman F."/>
            <person name="Gevaert K."/>
            <person name="Aldabe R."/>
        </authorList>
    </citation>
    <scope>ACETYLATION [LARGE SCALE ANALYSIS] AT SER-2</scope>
    <scope>CLEAVAGE OF INITIATOR METHIONINE [LARGE SCALE ANALYSIS]</scope>
    <scope>IDENTIFICATION BY MASS SPECTROMETRY [LARGE SCALE ANALYSIS]</scope>
</reference>
<reference key="24">
    <citation type="journal article" date="2021" name="Science">
        <title>Mechanisms that ensure speed and fidelity in eukaryotic translation termination.</title>
        <authorList>
            <person name="Lawson M.R."/>
            <person name="Lessen L.N."/>
            <person name="Wang J."/>
            <person name="Prabhakar A."/>
            <person name="Corsepius N.C."/>
            <person name="Green R."/>
            <person name="Puglisi J.D."/>
        </authorList>
    </citation>
    <scope>FUNCTION</scope>
    <scope>CATALYTIC ACTIVITY</scope>
    <scope>MUTAGENESIS OF HIS-348</scope>
</reference>
<reference key="25">
    <citation type="journal article" date="2005" name="Nature">
        <title>Structure of the cross-beta spine of amyloid-like fibrils.</title>
        <authorList>
            <person name="Nelson R."/>
            <person name="Sawaya M.R."/>
            <person name="Balbirnie M."/>
            <person name="Madsen A.O."/>
            <person name="Riekel C."/>
            <person name="Grothe R."/>
            <person name="Eisenberg D."/>
        </authorList>
    </citation>
    <scope>X-RAY CRYSTALLOGRAPHY (1.30 ANGSTROMS) OF 7-13</scope>
</reference>
<reference key="26">
    <citation type="journal article" date="2006" name="Proc. Natl. Acad. Sci. U.S.A.">
        <title>Amyloid of the prion domain of Sup35p has an in-register parallel beta-sheet structure.</title>
        <authorList>
            <person name="Shewmaker F."/>
            <person name="Wickner R.B."/>
            <person name="Tycko R."/>
        </authorList>
    </citation>
    <scope>STRUCTURE BY NMR OF 1-253</scope>
</reference>
<keyword id="KW-0002">3D-structure</keyword>
<keyword id="KW-0007">Acetylation</keyword>
<keyword id="KW-0034">Amyloid</keyword>
<keyword id="KW-0963">Cytoplasm</keyword>
<keyword id="KW-0342">GTP-binding</keyword>
<keyword id="KW-0378">Hydrolase</keyword>
<keyword id="KW-0547">Nucleotide-binding</keyword>
<keyword id="KW-0597">Phosphoprotein</keyword>
<keyword id="KW-0640">Prion</keyword>
<keyword id="KW-0648">Protein biosynthesis</keyword>
<keyword id="KW-1185">Reference proteome</keyword>
<keyword id="KW-0677">Repeat</keyword>
<proteinExistence type="evidence at protein level"/>
<sequence length="685" mass="76551">MSDSNQGNNQQNYQQYSQNGNQQQGNNRYQGYQAYNAQAQPAGGYYQNYQGYSGYQQGGYQQYNPDAGYQQQYNPQGGYQQYNPQGGYQQQFNPQGGRGNYKNFNYNNNLQGYQAGFQPQSQGMSLNDFQKQQKQAAPKPKKTLKLVSSSGIKLANATKKVGTKPAESDKKEEEKSAETKEPTKEPTKVEEPVKKEEKPVQTEEKTEEKSELPKVEDLKISESTHNTNNANVTSADALIKEQEEEVDDEVVNDMFGGKDHVSLIFMGHVDAGKSTMGGNLLYLTGSVDKRTIEKYEREAKDAGRQGWYLSWVMDTNKEERNDGKTIEVGKAYFETEKRRYTILDAPGHKMYVSEMIGGASQADVGVLVISARKGEYETGFERGGQTREHALLAKTQGVNKMVVVVNKMDDPTVNWSKERYDQCVSNVSNFLRAIGYNIKTDVVFMPVSGYSGANLKDHVDPKECPWYTGPTLLEYLDTMNHVDRHINAPFMLPIAAKMKDLGTIVEGKIESGHIKKGQSTLLMPNKTAVEIQNIYNETENEVDMAMCGEQVKLRIKGVEEEDISPGFVLTSPKNPIKSVTKFVAQIAIVELKSIIAAGFSCVMHVHTAIEEVHIVKLLHKLEKGTNRKSKKPPAFAKKGMKVIAVLETEAPVCVETYQDYPQLGRFTLRDQGTTIAIGKIVKIAE</sequence>
<protein>
    <recommendedName>
        <fullName>Eukaryotic peptide chain release factor GTP-binding subunit</fullName>
        <ecNumber evidence="10">3.6.5.-</ecNumber>
    </recommendedName>
    <alternativeName>
        <fullName>ERF-3</fullName>
        <shortName>ERF3</shortName>
    </alternativeName>
    <alternativeName>
        <fullName>ERF2</fullName>
    </alternativeName>
    <alternativeName>
        <fullName>G1 to S phase transition protein 1</fullName>
    </alternativeName>
    <alternativeName>
        <fullName>Omnipotent suppressor protein 2</fullName>
    </alternativeName>
    <alternativeName>
        <fullName>PSI no more protein 2</fullName>
    </alternativeName>
    <alternativeName>
        <fullName>Polypeptide release factor 3</fullName>
    </alternativeName>
    <alternativeName>
        <fullName>Translation release factor 3</fullName>
    </alternativeName>
</protein>
<dbReference type="EC" id="3.6.5.-" evidence="10"/>
<dbReference type="EMBL" id="M21129">
    <property type="protein sequence ID" value="AAA35133.1"/>
    <property type="molecule type" value="Genomic_DNA"/>
</dbReference>
<dbReference type="EMBL" id="X07163">
    <property type="protein sequence ID" value="CAA30155.1"/>
    <property type="molecule type" value="Genomic_DNA"/>
</dbReference>
<dbReference type="EMBL" id="Y00829">
    <property type="protein sequence ID" value="CAA68760.1"/>
    <property type="molecule type" value="Genomic_DNA"/>
</dbReference>
<dbReference type="EMBL" id="Z46727">
    <property type="protein sequence ID" value="CAA86677.1"/>
    <property type="molecule type" value="Genomic_DNA"/>
</dbReference>
<dbReference type="EMBL" id="BK006938">
    <property type="protein sequence ID" value="DAA12014.1"/>
    <property type="molecule type" value="Genomic_DNA"/>
</dbReference>
<dbReference type="PIR" id="S00733">
    <property type="entry name" value="EFBYS2"/>
</dbReference>
<dbReference type="RefSeq" id="NP_010457.3">
    <property type="nucleotide sequence ID" value="NM_001180479.3"/>
</dbReference>
<dbReference type="PDB" id="1YJO">
    <property type="method" value="X-ray"/>
    <property type="resolution" value="1.30 A"/>
    <property type="chains" value="A=8-13"/>
</dbReference>
<dbReference type="PDB" id="1YJP">
    <property type="method" value="X-ray"/>
    <property type="resolution" value="1.80 A"/>
    <property type="chains" value="A=7-13"/>
</dbReference>
<dbReference type="PDB" id="2OMM">
    <property type="method" value="X-ray"/>
    <property type="resolution" value="2.00 A"/>
    <property type="chains" value="A=7-13"/>
</dbReference>
<dbReference type="PDB" id="4CRN">
    <property type="method" value="EM"/>
    <property type="resolution" value="9.10 A"/>
    <property type="chains" value="P=256-685"/>
</dbReference>
<dbReference type="PDB" id="5K2E">
    <property type="method" value="EM"/>
    <property type="resolution" value="1.00 A"/>
    <property type="chains" value="A=8-13"/>
</dbReference>
<dbReference type="PDB" id="5K2F">
    <property type="method" value="EM"/>
    <property type="resolution" value="1.00 A"/>
    <property type="chains" value="A=8-13"/>
</dbReference>
<dbReference type="PDB" id="5K2G">
    <property type="method" value="EM"/>
    <property type="resolution" value="1.10 A"/>
    <property type="chains" value="A=7-13"/>
</dbReference>
<dbReference type="PDB" id="5K2H">
    <property type="method" value="EM"/>
    <property type="resolution" value="1.05 A"/>
    <property type="chains" value="A=7-13"/>
</dbReference>
<dbReference type="PDBsum" id="1YJO"/>
<dbReference type="PDBsum" id="1YJP"/>
<dbReference type="PDBsum" id="2OMM"/>
<dbReference type="PDBsum" id="4CRN"/>
<dbReference type="PDBsum" id="5K2E"/>
<dbReference type="PDBsum" id="5K2F"/>
<dbReference type="PDBsum" id="5K2G"/>
<dbReference type="PDBsum" id="5K2H"/>
<dbReference type="BMRB" id="P05453"/>
<dbReference type="EMDB" id="EMD-8196"/>
<dbReference type="EMDB" id="EMD-8197"/>
<dbReference type="EMDB" id="EMD-8198"/>
<dbReference type="EMDB" id="EMD-8199"/>
<dbReference type="SMR" id="P05453"/>
<dbReference type="BioGRID" id="32225">
    <property type="interactions" value="925"/>
</dbReference>
<dbReference type="ComplexPortal" id="CPX-435">
    <property type="entry name" value="ERF1-ERF3 translation release factor complex"/>
</dbReference>
<dbReference type="DIP" id="DIP-376N"/>
<dbReference type="FunCoup" id="P05453">
    <property type="interactions" value="1116"/>
</dbReference>
<dbReference type="IntAct" id="P05453">
    <property type="interactions" value="60"/>
</dbReference>
<dbReference type="MINT" id="P05453"/>
<dbReference type="STRING" id="4932.YDR172W"/>
<dbReference type="BindingDB" id="P05453"/>
<dbReference type="ChEMBL" id="CHEMBL3308902"/>
<dbReference type="GlyGen" id="P05453">
    <property type="glycosylation" value="3 sites, 1 O-linked glycan (3 sites)"/>
</dbReference>
<dbReference type="iPTMnet" id="P05453"/>
<dbReference type="PaxDb" id="4932-YDR172W"/>
<dbReference type="PeptideAtlas" id="P05453"/>
<dbReference type="EnsemblFungi" id="YDR172W_mRNA">
    <property type="protein sequence ID" value="YDR172W"/>
    <property type="gene ID" value="YDR172W"/>
</dbReference>
<dbReference type="GeneID" id="851752"/>
<dbReference type="KEGG" id="sce:YDR172W"/>
<dbReference type="AGR" id="SGD:S000002579"/>
<dbReference type="SGD" id="S000002579">
    <property type="gene designation" value="SUP35"/>
</dbReference>
<dbReference type="VEuPathDB" id="FungiDB:YDR172W"/>
<dbReference type="eggNOG" id="KOG0459">
    <property type="taxonomic scope" value="Eukaryota"/>
</dbReference>
<dbReference type="GeneTree" id="ENSGT00940000169696"/>
<dbReference type="HOGENOM" id="CLU_007265_3_8_1"/>
<dbReference type="InParanoid" id="P05453"/>
<dbReference type="OMA" id="ARFDECT"/>
<dbReference type="OrthoDB" id="342024at2759"/>
<dbReference type="BioCyc" id="YEAST:G3O-29761-MONOMER"/>
<dbReference type="Reactome" id="R-SCE-72764">
    <property type="pathway name" value="Eukaryotic Translation Termination"/>
</dbReference>
<dbReference type="Reactome" id="R-SCE-975956">
    <property type="pathway name" value="Nonsense Mediated Decay (NMD) independent of the Exon Junction Complex (EJC)"/>
</dbReference>
<dbReference type="Reactome" id="R-SCE-975957">
    <property type="pathway name" value="Nonsense Mediated Decay (NMD) enhanced by the Exon Junction Complex (EJC)"/>
</dbReference>
<dbReference type="BioGRID-ORCS" id="851752">
    <property type="hits" value="10 hits in 10 CRISPR screens"/>
</dbReference>
<dbReference type="CD-CODE" id="2C224C76">
    <property type="entry name" value="Synthetic Condensate 000284"/>
</dbReference>
<dbReference type="CD-CODE" id="2F7EB6DB">
    <property type="entry name" value="Synthetic Condensate 000037"/>
</dbReference>
<dbReference type="CD-CODE" id="6209F224">
    <property type="entry name" value="Synthetic Condensate 000281"/>
</dbReference>
<dbReference type="CD-CODE" id="67785C55">
    <property type="entry name" value="Hypersomatic shock foci"/>
</dbReference>
<dbReference type="CD-CODE" id="A777E0F8">
    <property type="entry name" value="P-body"/>
</dbReference>
<dbReference type="CD-CODE" id="CE67A724">
    <property type="entry name" value="Cytoplasmic protein granule"/>
</dbReference>
<dbReference type="CD-CODE" id="E03F929F">
    <property type="entry name" value="Stress granule"/>
</dbReference>
<dbReference type="CD-CODE" id="F3106323">
    <property type="entry name" value="Sup35 condensate"/>
</dbReference>
<dbReference type="EvolutionaryTrace" id="P05453"/>
<dbReference type="PRO" id="PR:P05453"/>
<dbReference type="Proteomes" id="UP000002311">
    <property type="component" value="Chromosome IV"/>
</dbReference>
<dbReference type="RNAct" id="P05453">
    <property type="molecule type" value="protein"/>
</dbReference>
<dbReference type="GO" id="GO:0005737">
    <property type="term" value="C:cytoplasm"/>
    <property type="evidence" value="ECO:0000303"/>
    <property type="project" value="ComplexPortal"/>
</dbReference>
<dbReference type="GO" id="GO:0010494">
    <property type="term" value="C:cytoplasmic stress granule"/>
    <property type="evidence" value="ECO:0000314"/>
    <property type="project" value="SGD"/>
</dbReference>
<dbReference type="GO" id="GO:0005829">
    <property type="term" value="C:cytosol"/>
    <property type="evidence" value="ECO:0007005"/>
    <property type="project" value="SGD"/>
</dbReference>
<dbReference type="GO" id="GO:0018444">
    <property type="term" value="C:translation release factor complex"/>
    <property type="evidence" value="ECO:0000314"/>
    <property type="project" value="UniProtKB"/>
</dbReference>
<dbReference type="GO" id="GO:0005525">
    <property type="term" value="F:GTP binding"/>
    <property type="evidence" value="ECO:0007669"/>
    <property type="project" value="UniProtKB-KW"/>
</dbReference>
<dbReference type="GO" id="GO:0003924">
    <property type="term" value="F:GTPase activity"/>
    <property type="evidence" value="ECO:0000314"/>
    <property type="project" value="UniProtKB"/>
</dbReference>
<dbReference type="GO" id="GO:0042802">
    <property type="term" value="F:identical protein binding"/>
    <property type="evidence" value="ECO:0000353"/>
    <property type="project" value="IntAct"/>
</dbReference>
<dbReference type="GO" id="GO:0003729">
    <property type="term" value="F:mRNA binding"/>
    <property type="evidence" value="ECO:0007005"/>
    <property type="project" value="SGD"/>
</dbReference>
<dbReference type="GO" id="GO:0043022">
    <property type="term" value="F:ribosome binding"/>
    <property type="evidence" value="ECO:0000314"/>
    <property type="project" value="SGD"/>
</dbReference>
<dbReference type="GO" id="GO:0003747">
    <property type="term" value="F:translation release factor activity"/>
    <property type="evidence" value="ECO:0000314"/>
    <property type="project" value="SGD"/>
</dbReference>
<dbReference type="GO" id="GO:0000288">
    <property type="term" value="P:nuclear-transcribed mRNA catabolic process, deadenylation-dependent decay"/>
    <property type="evidence" value="ECO:0000315"/>
    <property type="project" value="SGD"/>
</dbReference>
<dbReference type="GO" id="GO:0006417">
    <property type="term" value="P:regulation of translation"/>
    <property type="evidence" value="ECO:0007669"/>
    <property type="project" value="UniProtKB-ARBA"/>
</dbReference>
<dbReference type="GO" id="GO:0006412">
    <property type="term" value="P:translation"/>
    <property type="evidence" value="ECO:0000318"/>
    <property type="project" value="GO_Central"/>
</dbReference>
<dbReference type="GO" id="GO:0006415">
    <property type="term" value="P:translational termination"/>
    <property type="evidence" value="ECO:0000314"/>
    <property type="project" value="UniProtKB"/>
</dbReference>
<dbReference type="CDD" id="cd01883">
    <property type="entry name" value="EF1_alpha"/>
    <property type="match status" value="1"/>
</dbReference>
<dbReference type="CDD" id="cd03704">
    <property type="entry name" value="eRF3_C_III"/>
    <property type="match status" value="1"/>
</dbReference>
<dbReference type="CDD" id="cd04089">
    <property type="entry name" value="eRF3_II"/>
    <property type="match status" value="1"/>
</dbReference>
<dbReference type="FunFam" id="2.40.30.10:FF:000017">
    <property type="entry name" value="Eukaryotic peptide chain release factor GTP-binding subunit"/>
    <property type="match status" value="1"/>
</dbReference>
<dbReference type="FunFam" id="3.40.50.300:FF:000503">
    <property type="entry name" value="Peptide chain release factor subunit 3"/>
    <property type="match status" value="1"/>
</dbReference>
<dbReference type="FunFam" id="2.40.30.10:FF:000061">
    <property type="entry name" value="Translation release factor eRF3, putative"/>
    <property type="match status" value="1"/>
</dbReference>
<dbReference type="Gene3D" id="3.40.50.300">
    <property type="entry name" value="P-loop containing nucleotide triphosphate hydrolases"/>
    <property type="match status" value="1"/>
</dbReference>
<dbReference type="Gene3D" id="2.40.30.10">
    <property type="entry name" value="Translation factors"/>
    <property type="match status" value="2"/>
</dbReference>
<dbReference type="InterPro" id="IPR004161">
    <property type="entry name" value="EFTu-like_2"/>
</dbReference>
<dbReference type="InterPro" id="IPR031157">
    <property type="entry name" value="G_TR_CS"/>
</dbReference>
<dbReference type="InterPro" id="IPR054696">
    <property type="entry name" value="GTP-eEF1A_C"/>
</dbReference>
<dbReference type="InterPro" id="IPR027417">
    <property type="entry name" value="P-loop_NTPase"/>
</dbReference>
<dbReference type="InterPro" id="IPR003285">
    <property type="entry name" value="Sup35"/>
</dbReference>
<dbReference type="InterPro" id="IPR000795">
    <property type="entry name" value="T_Tr_GTP-bd_dom"/>
</dbReference>
<dbReference type="InterPro" id="IPR050100">
    <property type="entry name" value="TRAFAC_GTPase_members"/>
</dbReference>
<dbReference type="InterPro" id="IPR009000">
    <property type="entry name" value="Transl_B-barrel_sf"/>
</dbReference>
<dbReference type="InterPro" id="IPR009001">
    <property type="entry name" value="Transl_elong_EF1A/Init_IF2_C"/>
</dbReference>
<dbReference type="PANTHER" id="PTHR23115">
    <property type="entry name" value="TRANSLATION FACTOR"/>
    <property type="match status" value="1"/>
</dbReference>
<dbReference type="Pfam" id="PF22594">
    <property type="entry name" value="GTP-eEF1A_C"/>
    <property type="match status" value="1"/>
</dbReference>
<dbReference type="Pfam" id="PF00009">
    <property type="entry name" value="GTP_EFTU"/>
    <property type="match status" value="1"/>
</dbReference>
<dbReference type="Pfam" id="PF03144">
    <property type="entry name" value="GTP_EFTU_D2"/>
    <property type="match status" value="1"/>
</dbReference>
<dbReference type="PRINTS" id="PR00315">
    <property type="entry name" value="ELONGATNFCT"/>
</dbReference>
<dbReference type="PRINTS" id="PR01343">
    <property type="entry name" value="YEASTERF"/>
</dbReference>
<dbReference type="SUPFAM" id="SSF50465">
    <property type="entry name" value="EF-Tu/eEF-1alpha/eIF2-gamma C-terminal domain"/>
    <property type="match status" value="1"/>
</dbReference>
<dbReference type="SUPFAM" id="SSF52540">
    <property type="entry name" value="P-loop containing nucleoside triphosphate hydrolases"/>
    <property type="match status" value="1"/>
</dbReference>
<dbReference type="SUPFAM" id="SSF50447">
    <property type="entry name" value="Translation proteins"/>
    <property type="match status" value="1"/>
</dbReference>
<dbReference type="PROSITE" id="PS00301">
    <property type="entry name" value="G_TR_1"/>
    <property type="match status" value="1"/>
</dbReference>
<dbReference type="PROSITE" id="PS51722">
    <property type="entry name" value="G_TR_2"/>
    <property type="match status" value="1"/>
</dbReference>
<comment type="function">
    <text evidence="5 7 10 11">GTPase component of the eRF1-eRF3-GTP ternary complex, a ternary complex that mediates translation termination in response to the termination codons UAA, UAG and UGA (PubMed:34413231, PubMed:7556078). SUP35/eRF3 mediates SUP45/eRF1 delivery to stop codons: The eRF1-eRF3-GTP complex binds to a stop codon in the ribosomal A-site (PubMed:34413231, PubMed:7556078). GTP hydrolysis by SUP35/eRF3 induces a conformational change that leads to its dissociation, permitting SUP45/eRF1 to accommodate fully in the A-site (PubMed:34413231, PubMed:7556078). Recruited by polyadenylate-binding protein PAB1 to poly(A)-tails of mRNAs (PubMed:12923185, PubMed:15337765). Interaction with PAB1 is also required for regulation of normal mRNA decay through translation termination-coupled poly(A) shortening (PubMed:12923185, PubMed:15337765).</text>
</comment>
<comment type="catalytic activity">
    <reaction evidence="10">
        <text>GTP + H2O = GDP + phosphate + H(+)</text>
        <dbReference type="Rhea" id="RHEA:19669"/>
        <dbReference type="ChEBI" id="CHEBI:15377"/>
        <dbReference type="ChEBI" id="CHEBI:15378"/>
        <dbReference type="ChEBI" id="CHEBI:37565"/>
        <dbReference type="ChEBI" id="CHEBI:43474"/>
        <dbReference type="ChEBI" id="CHEBI:58189"/>
    </reaction>
    <physiologicalReaction direction="left-to-right" evidence="10">
        <dbReference type="Rhea" id="RHEA:19670"/>
    </physiologicalReaction>
</comment>
<comment type="subunit">
    <text evidence="4 5 7 8 9">Heterodimer of two subunits, one of which binds GTP. Interacts with polyadenylate-binding protein PAB1, and TPA1.</text>
</comment>
<comment type="interaction">
    <interactant intactId="EBI-6540">
        <id>P05453</id>
    </interactant>
    <interactant intactId="EBI-22223">
        <id>P32644</id>
        <label>ECM32</label>
    </interactant>
    <organismsDiffer>false</organismsDiffer>
    <experiments>3</experiments>
</comment>
<comment type="interaction">
    <interactant intactId="EBI-6540">
        <id>P05453</id>
    </interactant>
    <interactant intactId="EBI-7635">
        <id>Q12315</id>
        <label>GLE1</label>
    </interactant>
    <organismsDiffer>false</organismsDiffer>
    <experiments>2</experiments>
</comment>
<comment type="interaction">
    <interactant intactId="EBI-6540">
        <id>P05453</id>
    </interactant>
    <interactant intactId="EBI-27858">
        <id>Q04638</id>
        <label>ITT1</label>
    </interactant>
    <organismsDiffer>false</organismsDiffer>
    <experiments>3</experiments>
</comment>
<comment type="interaction">
    <interactant intactId="EBI-6540">
        <id>P05453</id>
    </interactant>
    <interactant intactId="EBI-6540">
        <id>P05453</id>
        <label>SUP35</label>
    </interactant>
    <organismsDiffer>false</organismsDiffer>
    <experiments>10</experiments>
</comment>
<comment type="interaction">
    <interactant intactId="EBI-6540">
        <id>P05453</id>
    </interactant>
    <interactant intactId="EBI-6533">
        <id>P12385</id>
        <label>SUP45</label>
    </interactant>
    <organismsDiffer>false</organismsDiffer>
    <experiments>5</experiments>
</comment>
<comment type="subcellular location">
    <subcellularLocation>
        <location evidence="12">Cytoplasm</location>
    </subcellularLocation>
</comment>
<comment type="domain">
    <text>The prion domain (PrD) is a Gln/Asn (Q/N)-rich domain, which is unstructured in its native, soluble form, and which forms a parallel in-register beta-sheet in its amyloid form.</text>
</comment>
<comment type="miscellaneous">
    <text evidence="13 14 15 16">[PSI+] is the prion form of SUP35 (PubMed:8978027). [PSI+] is the result of a conformational change of the cellular SUP35 protein that becomes self-propagating and infectious. This conformational change generates a form of SUP35 that assembles into amyloid fibrils. [PSI+]-aggregates sequester soluble SUP35, resulting in defects in faithful translation termination by read-through of translation termination codons (PubMed:8670813). [PSI+] can be cured by GdnHCl and by deletion of the molecular chaperone HSP104, which is required for [PSI+] propagation (PubMed:9335589). It is speculated that the prion form would be at least mildly deleterious in most environments, but it might sometimes increase evolvability in certain harsh environments (PubMed:19917766).</text>
</comment>
<comment type="miscellaneous">
    <text evidence="6">Present with 78900 molecules/cell in log phase SD medium.</text>
</comment>
<comment type="similarity">
    <text evidence="2">Belongs to the TRAFAC class translation factor GTPase superfamily. Classic translation factor GTPase family. ERF3 subfamily.</text>
</comment>
<name>ERF3_YEAST</name>
<organism>
    <name type="scientific">Saccharomyces cerevisiae (strain ATCC 204508 / S288c)</name>
    <name type="common">Baker's yeast</name>
    <dbReference type="NCBI Taxonomy" id="559292"/>
    <lineage>
        <taxon>Eukaryota</taxon>
        <taxon>Fungi</taxon>
        <taxon>Dikarya</taxon>
        <taxon>Ascomycota</taxon>
        <taxon>Saccharomycotina</taxon>
        <taxon>Saccharomycetes</taxon>
        <taxon>Saccharomycetales</taxon>
        <taxon>Saccharomycetaceae</taxon>
        <taxon>Saccharomyces</taxon>
    </lineage>
</organism>
<feature type="initiator methionine" description="Removed" evidence="18">
    <location>
        <position position="1"/>
    </location>
</feature>
<feature type="chain" id="PRO_0000091482" description="Eukaryotic peptide chain release factor GTP-binding subunit">
    <location>
        <begin position="2"/>
        <end position="685"/>
    </location>
</feature>
<feature type="domain" description="tr-type G" evidence="2">
    <location>
        <begin position="258"/>
        <end position="484"/>
    </location>
</feature>
<feature type="region of interest" description="Disordered" evidence="3">
    <location>
        <begin position="1"/>
        <end position="34"/>
    </location>
</feature>
<feature type="region of interest" description="Interaction with PAB1">
    <location>
        <begin position="2"/>
        <end position="239"/>
    </location>
</feature>
<feature type="region of interest" description="Prion domain (PrD)">
    <location>
        <begin position="5"/>
        <end position="135"/>
    </location>
</feature>
<feature type="region of interest" description="Disordered" evidence="3">
    <location>
        <begin position="63"/>
        <end position="99"/>
    </location>
</feature>
<feature type="region of interest" description="Disordered" evidence="3">
    <location>
        <begin position="112"/>
        <end position="234"/>
    </location>
</feature>
<feature type="region of interest" description="Charged">
    <location>
        <begin position="139"/>
        <end position="249"/>
    </location>
</feature>
<feature type="region of interest" description="G1" evidence="2">
    <location>
        <begin position="267"/>
        <end position="274"/>
    </location>
</feature>
<feature type="region of interest" description="G2" evidence="2">
    <location>
        <begin position="323"/>
        <end position="327"/>
    </location>
</feature>
<feature type="region of interest" description="G3" evidence="2">
    <location>
        <begin position="344"/>
        <end position="347"/>
    </location>
</feature>
<feature type="region of interest" description="G4" evidence="2">
    <location>
        <begin position="406"/>
        <end position="409"/>
    </location>
</feature>
<feature type="region of interest" description="G5" evidence="2">
    <location>
        <begin position="448"/>
        <end position="450"/>
    </location>
</feature>
<feature type="compositionally biased region" description="Polar residues" evidence="3">
    <location>
        <begin position="117"/>
        <end position="129"/>
    </location>
</feature>
<feature type="compositionally biased region" description="Basic and acidic residues" evidence="3">
    <location>
        <begin position="166"/>
        <end position="222"/>
    </location>
</feature>
<feature type="compositionally biased region" description="Polar residues" evidence="3">
    <location>
        <begin position="223"/>
        <end position="234"/>
    </location>
</feature>
<feature type="binding site" evidence="1">
    <location>
        <begin position="267"/>
        <end position="274"/>
    </location>
    <ligand>
        <name>GTP</name>
        <dbReference type="ChEBI" id="CHEBI:37565"/>
    </ligand>
</feature>
<feature type="binding site" evidence="1">
    <location>
        <begin position="406"/>
        <end position="409"/>
    </location>
    <ligand>
        <name>GTP</name>
        <dbReference type="ChEBI" id="CHEBI:37565"/>
    </ligand>
</feature>
<feature type="binding site" evidence="1">
    <location>
        <begin position="449"/>
        <end position="450"/>
    </location>
    <ligand>
        <name>GTP</name>
        <dbReference type="ChEBI" id="CHEBI:37565"/>
    </ligand>
</feature>
<feature type="modified residue" description="N-acetylserine" evidence="18">
    <location>
        <position position="2"/>
    </location>
</feature>
<feature type="modified residue" description="Phosphoserine" evidence="17">
    <location>
        <position position="571"/>
    </location>
</feature>
<feature type="mutagenesis site" description="Abolished GTPase activity." evidence="10">
    <original>H</original>
    <variation>E</variation>
    <location>
        <position position="348"/>
    </location>
</feature>
<feature type="sequence conflict" description="In Ref. 4; CAA68760." evidence="12" ref="4">
    <original>S</original>
    <variation>C</variation>
    <location>
        <position position="53"/>
    </location>
</feature>